<proteinExistence type="inferred from homology"/>
<accession>Q54ST0</accession>
<keyword id="KW-0507">mRNA processing</keyword>
<keyword id="KW-0508">mRNA splicing</keyword>
<keyword id="KW-0539">Nucleus</keyword>
<keyword id="KW-1185">Reference proteome</keyword>
<keyword id="KW-0687">Ribonucleoprotein</keyword>
<keyword id="KW-0694">RNA-binding</keyword>
<keyword id="KW-0747">Spliceosome</keyword>
<name>NH2L1_DICDI</name>
<gene>
    <name type="ORF">DDB_G0282243</name>
</gene>
<dbReference type="EMBL" id="AAFI02000046">
    <property type="protein sequence ID" value="EAL66327.1"/>
    <property type="molecule type" value="Genomic_DNA"/>
</dbReference>
<dbReference type="SMR" id="Q54ST0"/>
<dbReference type="FunCoup" id="Q54ST0">
    <property type="interactions" value="651"/>
</dbReference>
<dbReference type="STRING" id="44689.Q54ST0"/>
<dbReference type="PaxDb" id="44689-DDB0233512"/>
<dbReference type="EnsemblProtists" id="EAL66327">
    <property type="protein sequence ID" value="EAL66327"/>
    <property type="gene ID" value="DDB_G0282243"/>
</dbReference>
<dbReference type="KEGG" id="ddi:DDB_G0282243"/>
<dbReference type="dictyBase" id="DDB_G0282243">
    <property type="gene designation" value="nhp2l1"/>
</dbReference>
<dbReference type="VEuPathDB" id="AmoebaDB:DDB_G0282243"/>
<dbReference type="eggNOG" id="KOG3387">
    <property type="taxonomic scope" value="Eukaryota"/>
</dbReference>
<dbReference type="HOGENOM" id="CLU_084513_4_1_1"/>
<dbReference type="InParanoid" id="Q54ST0"/>
<dbReference type="OMA" id="IKNQIYA"/>
<dbReference type="PhylomeDB" id="Q54ST0"/>
<dbReference type="Reactome" id="R-DDI-6791226">
    <property type="pathway name" value="Major pathway of rRNA processing in the nucleolus and cytosol"/>
</dbReference>
<dbReference type="PRO" id="PR:Q54ST0"/>
<dbReference type="Proteomes" id="UP000002195">
    <property type="component" value="Chromosome 3"/>
</dbReference>
<dbReference type="GO" id="GO:0031428">
    <property type="term" value="C:box C/D methylation guide snoRNP complex"/>
    <property type="evidence" value="ECO:0000318"/>
    <property type="project" value="GO_Central"/>
</dbReference>
<dbReference type="GO" id="GO:0005730">
    <property type="term" value="C:nucleolus"/>
    <property type="evidence" value="ECO:0000318"/>
    <property type="project" value="GO_Central"/>
</dbReference>
<dbReference type="GO" id="GO:0071011">
    <property type="term" value="C:precatalytic spliceosome"/>
    <property type="evidence" value="ECO:0000318"/>
    <property type="project" value="GO_Central"/>
</dbReference>
<dbReference type="GO" id="GO:0032040">
    <property type="term" value="C:small-subunit processome"/>
    <property type="evidence" value="ECO:0000318"/>
    <property type="project" value="GO_Central"/>
</dbReference>
<dbReference type="GO" id="GO:0046540">
    <property type="term" value="C:U4/U6 x U5 tri-snRNP complex"/>
    <property type="evidence" value="ECO:0000318"/>
    <property type="project" value="GO_Central"/>
</dbReference>
<dbReference type="GO" id="GO:0003723">
    <property type="term" value="F:RNA binding"/>
    <property type="evidence" value="ECO:0000250"/>
    <property type="project" value="dictyBase"/>
</dbReference>
<dbReference type="GO" id="GO:0030490">
    <property type="term" value="P:maturation of SSU-rRNA"/>
    <property type="evidence" value="ECO:0000318"/>
    <property type="project" value="GO_Central"/>
</dbReference>
<dbReference type="GO" id="GO:0000398">
    <property type="term" value="P:mRNA splicing, via spliceosome"/>
    <property type="evidence" value="ECO:0000318"/>
    <property type="project" value="GO_Central"/>
</dbReference>
<dbReference type="CDD" id="cd21104">
    <property type="entry name" value="SNU13"/>
    <property type="match status" value="1"/>
</dbReference>
<dbReference type="FunFam" id="3.30.1330.30:FF:000002">
    <property type="entry name" value="NHP2-like protein 1 homolog"/>
    <property type="match status" value="1"/>
</dbReference>
<dbReference type="Gene3D" id="3.30.1330.30">
    <property type="match status" value="1"/>
</dbReference>
<dbReference type="InterPro" id="IPR050257">
    <property type="entry name" value="eL8/uL1-like"/>
</dbReference>
<dbReference type="InterPro" id="IPR002415">
    <property type="entry name" value="H/ACA_rnp_Nhp2-like"/>
</dbReference>
<dbReference type="InterPro" id="IPR029064">
    <property type="entry name" value="Ribosomal_eL30-like_sf"/>
</dbReference>
<dbReference type="InterPro" id="IPR004037">
    <property type="entry name" value="Ribosomal_eL8-like_CS"/>
</dbReference>
<dbReference type="InterPro" id="IPR004038">
    <property type="entry name" value="Ribosomal_eL8/eL30/eS12/Gad45"/>
</dbReference>
<dbReference type="InterPro" id="IPR018492">
    <property type="entry name" value="Ribosomal_eL8/Nhp2"/>
</dbReference>
<dbReference type="PANTHER" id="PTHR23105">
    <property type="entry name" value="RIBOSOMAL PROTEIN L7AE FAMILY MEMBER"/>
    <property type="match status" value="1"/>
</dbReference>
<dbReference type="Pfam" id="PF01248">
    <property type="entry name" value="Ribosomal_L7Ae"/>
    <property type="match status" value="1"/>
</dbReference>
<dbReference type="PRINTS" id="PR00881">
    <property type="entry name" value="L7ARS6FAMILY"/>
</dbReference>
<dbReference type="PRINTS" id="PR00883">
    <property type="entry name" value="NUCLEARHMG"/>
</dbReference>
<dbReference type="SUPFAM" id="SSF55315">
    <property type="entry name" value="L30e-like"/>
    <property type="match status" value="1"/>
</dbReference>
<dbReference type="PROSITE" id="PS01082">
    <property type="entry name" value="RIBOSOMAL_L7AE"/>
    <property type="match status" value="1"/>
</dbReference>
<organism>
    <name type="scientific">Dictyostelium discoideum</name>
    <name type="common">Social amoeba</name>
    <dbReference type="NCBI Taxonomy" id="44689"/>
    <lineage>
        <taxon>Eukaryota</taxon>
        <taxon>Amoebozoa</taxon>
        <taxon>Evosea</taxon>
        <taxon>Eumycetozoa</taxon>
        <taxon>Dictyostelia</taxon>
        <taxon>Dictyosteliales</taxon>
        <taxon>Dictyosteliaceae</taxon>
        <taxon>Dictyostelium</taxon>
    </lineage>
</organism>
<feature type="chain" id="PRO_0000320042" description="NHP2-like protein 1 homolog">
    <location>
        <begin position="1"/>
        <end position="129"/>
    </location>
</feature>
<protein>
    <recommendedName>
        <fullName>NHP2-like protein 1 homolog</fullName>
    </recommendedName>
</protein>
<comment type="function">
    <text evidence="1">Binds to the 5'-stem-loop of U4 snRNA and may play a role in the late stage of spliceosome assembly. The protein undergoes a conformational change upon RNA-binding (By similarity).</text>
</comment>
<comment type="subcellular location">
    <subcellularLocation>
        <location evidence="1">Nucleus</location>
        <location evidence="1">Nucleolus</location>
    </subcellularLocation>
</comment>
<comment type="similarity">
    <text evidence="2">Belongs to the eukaryotic ribosomal protein eL8 family.</text>
</comment>
<sequence>MADSSNNEKAKPLADSKLTLTILDLIQQSNNLGQLKKGANECTKAVSRSTAEFVVLAADAEPLEILLHIPLLCEDKNIPYVFVSSKSELGRACDVSRPVVACAVTVDDKSQLKSQITNVKDSLDRLWIV</sequence>
<reference key="1">
    <citation type="journal article" date="2005" name="Nature">
        <title>The genome of the social amoeba Dictyostelium discoideum.</title>
        <authorList>
            <person name="Eichinger L."/>
            <person name="Pachebat J.A."/>
            <person name="Gloeckner G."/>
            <person name="Rajandream M.A."/>
            <person name="Sucgang R."/>
            <person name="Berriman M."/>
            <person name="Song J."/>
            <person name="Olsen R."/>
            <person name="Szafranski K."/>
            <person name="Xu Q."/>
            <person name="Tunggal B."/>
            <person name="Kummerfeld S."/>
            <person name="Madera M."/>
            <person name="Konfortov B.A."/>
            <person name="Rivero F."/>
            <person name="Bankier A.T."/>
            <person name="Lehmann R."/>
            <person name="Hamlin N."/>
            <person name="Davies R."/>
            <person name="Gaudet P."/>
            <person name="Fey P."/>
            <person name="Pilcher K."/>
            <person name="Chen G."/>
            <person name="Saunders D."/>
            <person name="Sodergren E.J."/>
            <person name="Davis P."/>
            <person name="Kerhornou A."/>
            <person name="Nie X."/>
            <person name="Hall N."/>
            <person name="Anjard C."/>
            <person name="Hemphill L."/>
            <person name="Bason N."/>
            <person name="Farbrother P."/>
            <person name="Desany B."/>
            <person name="Just E."/>
            <person name="Morio T."/>
            <person name="Rost R."/>
            <person name="Churcher C.M."/>
            <person name="Cooper J."/>
            <person name="Haydock S."/>
            <person name="van Driessche N."/>
            <person name="Cronin A."/>
            <person name="Goodhead I."/>
            <person name="Muzny D.M."/>
            <person name="Mourier T."/>
            <person name="Pain A."/>
            <person name="Lu M."/>
            <person name="Harper D."/>
            <person name="Lindsay R."/>
            <person name="Hauser H."/>
            <person name="James K.D."/>
            <person name="Quiles M."/>
            <person name="Madan Babu M."/>
            <person name="Saito T."/>
            <person name="Buchrieser C."/>
            <person name="Wardroper A."/>
            <person name="Felder M."/>
            <person name="Thangavelu M."/>
            <person name="Johnson D."/>
            <person name="Knights A."/>
            <person name="Loulseged H."/>
            <person name="Mungall K.L."/>
            <person name="Oliver K."/>
            <person name="Price C."/>
            <person name="Quail M.A."/>
            <person name="Urushihara H."/>
            <person name="Hernandez J."/>
            <person name="Rabbinowitsch E."/>
            <person name="Steffen D."/>
            <person name="Sanders M."/>
            <person name="Ma J."/>
            <person name="Kohara Y."/>
            <person name="Sharp S."/>
            <person name="Simmonds M.N."/>
            <person name="Spiegler S."/>
            <person name="Tivey A."/>
            <person name="Sugano S."/>
            <person name="White B."/>
            <person name="Walker D."/>
            <person name="Woodward J.R."/>
            <person name="Winckler T."/>
            <person name="Tanaka Y."/>
            <person name="Shaulsky G."/>
            <person name="Schleicher M."/>
            <person name="Weinstock G.M."/>
            <person name="Rosenthal A."/>
            <person name="Cox E.C."/>
            <person name="Chisholm R.L."/>
            <person name="Gibbs R.A."/>
            <person name="Loomis W.F."/>
            <person name="Platzer M."/>
            <person name="Kay R.R."/>
            <person name="Williams J.G."/>
            <person name="Dear P.H."/>
            <person name="Noegel A.A."/>
            <person name="Barrell B.G."/>
            <person name="Kuspa A."/>
        </authorList>
    </citation>
    <scope>NUCLEOTIDE SEQUENCE [LARGE SCALE GENOMIC DNA]</scope>
    <source>
        <strain>AX4</strain>
    </source>
</reference>
<evidence type="ECO:0000250" key="1"/>
<evidence type="ECO:0000305" key="2"/>